<gene>
    <name type="ORF">SPCC613.01</name>
    <name type="ORF">SPCC757.14</name>
</gene>
<evidence type="ECO:0000255" key="1"/>
<evidence type="ECO:0000256" key="2">
    <source>
        <dbReference type="SAM" id="MobiDB-lite"/>
    </source>
</evidence>
<evidence type="ECO:0000269" key="3">
    <source>
    </source>
</evidence>
<evidence type="ECO:0000305" key="4"/>
<organism>
    <name type="scientific">Schizosaccharomyces pombe (strain 972 / ATCC 24843)</name>
    <name type="common">Fission yeast</name>
    <dbReference type="NCBI Taxonomy" id="284812"/>
    <lineage>
        <taxon>Eukaryota</taxon>
        <taxon>Fungi</taxon>
        <taxon>Dikarya</taxon>
        <taxon>Ascomycota</taxon>
        <taxon>Taphrinomycotina</taxon>
        <taxon>Schizosaccharomycetes</taxon>
        <taxon>Schizosaccharomycetales</taxon>
        <taxon>Schizosaccharomycetaceae</taxon>
        <taxon>Schizosaccharomyces</taxon>
    </lineage>
</organism>
<keyword id="KW-0472">Membrane</keyword>
<keyword id="KW-0597">Phosphoprotein</keyword>
<keyword id="KW-1185">Reference proteome</keyword>
<keyword id="KW-0812">Transmembrane</keyword>
<keyword id="KW-1133">Transmembrane helix</keyword>
<protein>
    <recommendedName>
        <fullName>Uncharacterized protein CC613.01</fullName>
    </recommendedName>
</protein>
<reference key="1">
    <citation type="journal article" date="2002" name="Nature">
        <title>The genome sequence of Schizosaccharomyces pombe.</title>
        <authorList>
            <person name="Wood V."/>
            <person name="Gwilliam R."/>
            <person name="Rajandream M.A."/>
            <person name="Lyne M.H."/>
            <person name="Lyne R."/>
            <person name="Stewart A."/>
            <person name="Sgouros J.G."/>
            <person name="Peat N."/>
            <person name="Hayles J."/>
            <person name="Baker S.G."/>
            <person name="Basham D."/>
            <person name="Bowman S."/>
            <person name="Brooks K."/>
            <person name="Brown D."/>
            <person name="Brown S."/>
            <person name="Chillingworth T."/>
            <person name="Churcher C.M."/>
            <person name="Collins M."/>
            <person name="Connor R."/>
            <person name="Cronin A."/>
            <person name="Davis P."/>
            <person name="Feltwell T."/>
            <person name="Fraser A."/>
            <person name="Gentles S."/>
            <person name="Goble A."/>
            <person name="Hamlin N."/>
            <person name="Harris D.E."/>
            <person name="Hidalgo J."/>
            <person name="Hodgson G."/>
            <person name="Holroyd S."/>
            <person name="Hornsby T."/>
            <person name="Howarth S."/>
            <person name="Huckle E.J."/>
            <person name="Hunt S."/>
            <person name="Jagels K."/>
            <person name="James K.D."/>
            <person name="Jones L."/>
            <person name="Jones M."/>
            <person name="Leather S."/>
            <person name="McDonald S."/>
            <person name="McLean J."/>
            <person name="Mooney P."/>
            <person name="Moule S."/>
            <person name="Mungall K.L."/>
            <person name="Murphy L.D."/>
            <person name="Niblett D."/>
            <person name="Odell C."/>
            <person name="Oliver K."/>
            <person name="O'Neil S."/>
            <person name="Pearson D."/>
            <person name="Quail M.A."/>
            <person name="Rabbinowitsch E."/>
            <person name="Rutherford K.M."/>
            <person name="Rutter S."/>
            <person name="Saunders D."/>
            <person name="Seeger K."/>
            <person name="Sharp S."/>
            <person name="Skelton J."/>
            <person name="Simmonds M.N."/>
            <person name="Squares R."/>
            <person name="Squares S."/>
            <person name="Stevens K."/>
            <person name="Taylor K."/>
            <person name="Taylor R.G."/>
            <person name="Tivey A."/>
            <person name="Walsh S.V."/>
            <person name="Warren T."/>
            <person name="Whitehead S."/>
            <person name="Woodward J.R."/>
            <person name="Volckaert G."/>
            <person name="Aert R."/>
            <person name="Robben J."/>
            <person name="Grymonprez B."/>
            <person name="Weltjens I."/>
            <person name="Vanstreels E."/>
            <person name="Rieger M."/>
            <person name="Schaefer M."/>
            <person name="Mueller-Auer S."/>
            <person name="Gabel C."/>
            <person name="Fuchs M."/>
            <person name="Duesterhoeft A."/>
            <person name="Fritzc C."/>
            <person name="Holzer E."/>
            <person name="Moestl D."/>
            <person name="Hilbert H."/>
            <person name="Borzym K."/>
            <person name="Langer I."/>
            <person name="Beck A."/>
            <person name="Lehrach H."/>
            <person name="Reinhardt R."/>
            <person name="Pohl T.M."/>
            <person name="Eger P."/>
            <person name="Zimmermann W."/>
            <person name="Wedler H."/>
            <person name="Wambutt R."/>
            <person name="Purnelle B."/>
            <person name="Goffeau A."/>
            <person name="Cadieu E."/>
            <person name="Dreano S."/>
            <person name="Gloux S."/>
            <person name="Lelaure V."/>
            <person name="Mottier S."/>
            <person name="Galibert F."/>
            <person name="Aves S.J."/>
            <person name="Xiang Z."/>
            <person name="Hunt C."/>
            <person name="Moore K."/>
            <person name="Hurst S.M."/>
            <person name="Lucas M."/>
            <person name="Rochet M."/>
            <person name="Gaillardin C."/>
            <person name="Tallada V.A."/>
            <person name="Garzon A."/>
            <person name="Thode G."/>
            <person name="Daga R.R."/>
            <person name="Cruzado L."/>
            <person name="Jimenez J."/>
            <person name="Sanchez M."/>
            <person name="del Rey F."/>
            <person name="Benito J."/>
            <person name="Dominguez A."/>
            <person name="Revuelta J.L."/>
            <person name="Moreno S."/>
            <person name="Armstrong J."/>
            <person name="Forsburg S.L."/>
            <person name="Cerutti L."/>
            <person name="Lowe T."/>
            <person name="McCombie W.R."/>
            <person name="Paulsen I."/>
            <person name="Potashkin J."/>
            <person name="Shpakovski G.V."/>
            <person name="Ussery D."/>
            <person name="Barrell B.G."/>
            <person name="Nurse P."/>
        </authorList>
    </citation>
    <scope>NUCLEOTIDE SEQUENCE [LARGE SCALE GENOMIC DNA]</scope>
    <source>
        <strain>972 / ATCC 24843</strain>
    </source>
</reference>
<reference key="2">
    <citation type="journal article" date="2008" name="J. Proteome Res.">
        <title>Phosphoproteome analysis of fission yeast.</title>
        <authorList>
            <person name="Wilson-Grady J.T."/>
            <person name="Villen J."/>
            <person name="Gygi S.P."/>
        </authorList>
    </citation>
    <scope>PHOSPHORYLATION [LARGE SCALE ANALYSIS] AT SER-64 AND SER-295</scope>
    <scope>IDENTIFICATION BY MASS SPECTROMETRY</scope>
</reference>
<dbReference type="EMBL" id="CU329672">
    <property type="protein sequence ID" value="CAA21239.2"/>
    <property type="molecule type" value="Genomic_DNA"/>
</dbReference>
<dbReference type="PIR" id="T41467">
    <property type="entry name" value="T41467"/>
</dbReference>
<dbReference type="RefSeq" id="NP_587689.2">
    <property type="nucleotide sequence ID" value="NM_001022684.2"/>
</dbReference>
<dbReference type="SMR" id="O74901"/>
<dbReference type="BioGRID" id="276087">
    <property type="interactions" value="9"/>
</dbReference>
<dbReference type="FunCoup" id="O74901">
    <property type="interactions" value="70"/>
</dbReference>
<dbReference type="iPTMnet" id="O74901"/>
<dbReference type="PaxDb" id="4896-SPCC613.01.1"/>
<dbReference type="EnsemblFungi" id="SPCC613.01.1">
    <property type="protein sequence ID" value="SPCC613.01.1:pep"/>
    <property type="gene ID" value="SPCC613.01"/>
</dbReference>
<dbReference type="KEGG" id="spo:2539525"/>
<dbReference type="PomBase" id="SPCC613.01"/>
<dbReference type="VEuPathDB" id="FungiDB:SPCC613.01"/>
<dbReference type="eggNOG" id="KOG2325">
    <property type="taxonomic scope" value="Eukaryota"/>
</dbReference>
<dbReference type="HOGENOM" id="CLU_042172_0_0_1"/>
<dbReference type="InParanoid" id="O74901"/>
<dbReference type="OMA" id="TSPAWIM"/>
<dbReference type="PhylomeDB" id="O74901"/>
<dbReference type="PRO" id="PR:O74901"/>
<dbReference type="Proteomes" id="UP000002485">
    <property type="component" value="Chromosome III"/>
</dbReference>
<dbReference type="GO" id="GO:0016020">
    <property type="term" value="C:membrane"/>
    <property type="evidence" value="ECO:0000318"/>
    <property type="project" value="GO_Central"/>
</dbReference>
<dbReference type="GO" id="GO:0022857">
    <property type="term" value="F:transmembrane transporter activity"/>
    <property type="evidence" value="ECO:0000318"/>
    <property type="project" value="GO_Central"/>
</dbReference>
<dbReference type="CDD" id="cd17326">
    <property type="entry name" value="MFS_MFSD8"/>
    <property type="match status" value="1"/>
</dbReference>
<dbReference type="FunFam" id="1.20.1250.20:FF:001084">
    <property type="entry name" value="Uncharacterized MFS-type transporter C330.07c"/>
    <property type="match status" value="1"/>
</dbReference>
<dbReference type="Gene3D" id="1.20.1250.20">
    <property type="entry name" value="MFS general substrate transporter like domains"/>
    <property type="match status" value="1"/>
</dbReference>
<dbReference type="InterPro" id="IPR011701">
    <property type="entry name" value="MFS"/>
</dbReference>
<dbReference type="InterPro" id="IPR051068">
    <property type="entry name" value="MFS_Domain-Containing_Protein"/>
</dbReference>
<dbReference type="InterPro" id="IPR036259">
    <property type="entry name" value="MFS_trans_sf"/>
</dbReference>
<dbReference type="PANTHER" id="PTHR23510">
    <property type="entry name" value="INNER MEMBRANE TRANSPORT PROTEIN YAJR"/>
    <property type="match status" value="1"/>
</dbReference>
<dbReference type="PANTHER" id="PTHR23510:SF76">
    <property type="entry name" value="MEMBRANE TRANSPORTER"/>
    <property type="match status" value="1"/>
</dbReference>
<dbReference type="Pfam" id="PF07690">
    <property type="entry name" value="MFS_1"/>
    <property type="match status" value="1"/>
</dbReference>
<dbReference type="SUPFAM" id="SSF103473">
    <property type="entry name" value="MFS general substrate transporter"/>
    <property type="match status" value="1"/>
</dbReference>
<proteinExistence type="evidence at protein level"/>
<name>YCS1_SCHPO</name>
<sequence>MSTTTETVTWSQYKPQETQRRLSRSSTITPSVSEYRSGFSKTAFGNIELEEIPDKQGNITRATSNLESNSYPKALDPDACPPKRSIALVLLNNLMSEMSLTIALPISAAYTEILGGTDAFSGLVIGIPTMISLVCLYPMLRFANPKSANGYTLYFRPLIVSCISQIIGHLLYSLAYRAQWLYLILIGRMCSGVGFTMFLYHKTYLTDKNFVGQNRSTFLATLNILAQILGSMAGAFLGGILAKASMHLTDPIWNQYTAGSWFMLFIWIVYSIFLSIFFKEVRVGNTATNVRKPESFTGKTAPLSFKQKFMLCFLSMAAFISIFNVAGYQTSVPIYAKALYHYNPFQSGNFLSLSSLVIAPFVFFSTFLSKWLEDRQIMLYGFMMGIVALIVHLVLDAVHKIPVQPYFVLYSIMQFGFSVGSAPLVSLATKQLHPKYHMITGVVVQVGISIGETVGSICGGAIFDITTVGFIAMNLGIALLVFIQLLYLWTFIKTKTG</sequence>
<feature type="chain" id="PRO_0000116554" description="Uncharacterized protein CC613.01">
    <location>
        <begin position="1"/>
        <end position="497"/>
    </location>
</feature>
<feature type="transmembrane region" description="Helical" evidence="1">
    <location>
        <begin position="86"/>
        <end position="106"/>
    </location>
</feature>
<feature type="transmembrane region" description="Helical" evidence="1">
    <location>
        <begin position="120"/>
        <end position="140"/>
    </location>
</feature>
<feature type="transmembrane region" description="Helical" evidence="1">
    <location>
        <begin position="155"/>
        <end position="175"/>
    </location>
</feature>
<feature type="transmembrane region" description="Helical" evidence="1">
    <location>
        <begin position="180"/>
        <end position="200"/>
    </location>
</feature>
<feature type="transmembrane region" description="Helical" evidence="1">
    <location>
        <begin position="222"/>
        <end position="242"/>
    </location>
</feature>
<feature type="transmembrane region" description="Helical" evidence="1">
    <location>
        <begin position="258"/>
        <end position="278"/>
    </location>
</feature>
<feature type="transmembrane region" description="Helical" evidence="1">
    <location>
        <begin position="309"/>
        <end position="329"/>
    </location>
</feature>
<feature type="transmembrane region" description="Helical" evidence="1">
    <location>
        <begin position="348"/>
        <end position="368"/>
    </location>
</feature>
<feature type="transmembrane region" description="Helical" evidence="1">
    <location>
        <begin position="377"/>
        <end position="397"/>
    </location>
</feature>
<feature type="transmembrane region" description="Helical" evidence="1">
    <location>
        <begin position="407"/>
        <end position="427"/>
    </location>
</feature>
<feature type="transmembrane region" description="Helical" evidence="1">
    <location>
        <begin position="443"/>
        <end position="463"/>
    </location>
</feature>
<feature type="transmembrane region" description="Helical" evidence="1">
    <location>
        <begin position="468"/>
        <end position="488"/>
    </location>
</feature>
<feature type="region of interest" description="Disordered" evidence="2">
    <location>
        <begin position="1"/>
        <end position="29"/>
    </location>
</feature>
<feature type="compositionally biased region" description="Polar residues" evidence="2">
    <location>
        <begin position="1"/>
        <end position="16"/>
    </location>
</feature>
<feature type="modified residue" description="Phosphoserine" evidence="3">
    <location>
        <position position="64"/>
    </location>
</feature>
<feature type="modified residue" description="Phosphoserine" evidence="3">
    <location>
        <position position="295"/>
    </location>
</feature>
<accession>O74901</accession>
<comment type="subcellular location">
    <subcellularLocation>
        <location evidence="4">Membrane</location>
        <topology evidence="4">Multi-pass membrane protein</topology>
    </subcellularLocation>
</comment>